<keyword id="KW-0093">Biotin biosynthesis</keyword>
<keyword id="KW-0663">Pyridoxal phosphate</keyword>
<keyword id="KW-1185">Reference proteome</keyword>
<keyword id="KW-0808">Transferase</keyword>
<accession>A1K6Q1</accession>
<reference key="1">
    <citation type="journal article" date="2006" name="Nat. Biotechnol.">
        <title>Complete genome of the mutualistic, N2-fixing grass endophyte Azoarcus sp. strain BH72.</title>
        <authorList>
            <person name="Krause A."/>
            <person name="Ramakumar A."/>
            <person name="Bartels D."/>
            <person name="Battistoni F."/>
            <person name="Bekel T."/>
            <person name="Boch J."/>
            <person name="Boehm M."/>
            <person name="Friedrich F."/>
            <person name="Hurek T."/>
            <person name="Krause L."/>
            <person name="Linke B."/>
            <person name="McHardy A.C."/>
            <person name="Sarkar A."/>
            <person name="Schneiker S."/>
            <person name="Syed A.A."/>
            <person name="Thauer R."/>
            <person name="Vorhoelter F.-J."/>
            <person name="Weidner S."/>
            <person name="Puehler A."/>
            <person name="Reinhold-Hurek B."/>
            <person name="Kaiser O."/>
            <person name="Goesmann A."/>
        </authorList>
    </citation>
    <scope>NUCLEOTIDE SEQUENCE [LARGE SCALE GENOMIC DNA]</scope>
    <source>
        <strain>BH72</strain>
    </source>
</reference>
<proteinExistence type="inferred from homology"/>
<name>BIOF_AZOSB</name>
<comment type="function">
    <text evidence="1">Catalyzes the decarboxylative condensation of pimeloyl-[acyl-carrier protein] and L-alanine to produce 8-amino-7-oxononanoate (AON), [acyl-carrier protein], and carbon dioxide.</text>
</comment>
<comment type="catalytic activity">
    <reaction evidence="1">
        <text>6-carboxyhexanoyl-[ACP] + L-alanine + H(+) = (8S)-8-amino-7-oxononanoate + holo-[ACP] + CO2</text>
        <dbReference type="Rhea" id="RHEA:42288"/>
        <dbReference type="Rhea" id="RHEA-COMP:9685"/>
        <dbReference type="Rhea" id="RHEA-COMP:9955"/>
        <dbReference type="ChEBI" id="CHEBI:15378"/>
        <dbReference type="ChEBI" id="CHEBI:16526"/>
        <dbReference type="ChEBI" id="CHEBI:57972"/>
        <dbReference type="ChEBI" id="CHEBI:64479"/>
        <dbReference type="ChEBI" id="CHEBI:78846"/>
        <dbReference type="ChEBI" id="CHEBI:149468"/>
        <dbReference type="EC" id="2.3.1.47"/>
    </reaction>
</comment>
<comment type="cofactor">
    <cofactor evidence="1">
        <name>pyridoxal 5'-phosphate</name>
        <dbReference type="ChEBI" id="CHEBI:597326"/>
    </cofactor>
</comment>
<comment type="pathway">
    <text evidence="1">Cofactor biosynthesis; biotin biosynthesis.</text>
</comment>
<comment type="subunit">
    <text evidence="1">Homodimer.</text>
</comment>
<comment type="similarity">
    <text evidence="1">Belongs to the class-II pyridoxal-phosphate-dependent aminotransferase family. BioF subfamily.</text>
</comment>
<organism>
    <name type="scientific">Azoarcus sp. (strain BH72)</name>
    <dbReference type="NCBI Taxonomy" id="418699"/>
    <lineage>
        <taxon>Bacteria</taxon>
        <taxon>Pseudomonadati</taxon>
        <taxon>Pseudomonadota</taxon>
        <taxon>Betaproteobacteria</taxon>
        <taxon>Rhodocyclales</taxon>
        <taxon>Zoogloeaceae</taxon>
        <taxon>Azoarcus</taxon>
    </lineage>
</organism>
<evidence type="ECO:0000255" key="1">
    <source>
        <dbReference type="HAMAP-Rule" id="MF_01693"/>
    </source>
</evidence>
<feature type="chain" id="PRO_0000380901" description="8-amino-7-oxononanoate synthase">
    <location>
        <begin position="1"/>
        <end position="390"/>
    </location>
</feature>
<feature type="binding site" evidence="1">
    <location>
        <position position="22"/>
    </location>
    <ligand>
        <name>substrate</name>
    </ligand>
</feature>
<feature type="binding site" evidence="1">
    <location>
        <begin position="109"/>
        <end position="110"/>
    </location>
    <ligand>
        <name>pyridoxal 5'-phosphate</name>
        <dbReference type="ChEBI" id="CHEBI:597326"/>
    </ligand>
</feature>
<feature type="binding site" evidence="1">
    <location>
        <position position="134"/>
    </location>
    <ligand>
        <name>substrate</name>
    </ligand>
</feature>
<feature type="binding site" evidence="1">
    <location>
        <position position="180"/>
    </location>
    <ligand>
        <name>pyridoxal 5'-phosphate</name>
        <dbReference type="ChEBI" id="CHEBI:597326"/>
    </ligand>
</feature>
<feature type="binding site" evidence="1">
    <location>
        <position position="208"/>
    </location>
    <ligand>
        <name>pyridoxal 5'-phosphate</name>
        <dbReference type="ChEBI" id="CHEBI:597326"/>
    </ligand>
</feature>
<feature type="binding site" evidence="1">
    <location>
        <position position="236"/>
    </location>
    <ligand>
        <name>pyridoxal 5'-phosphate</name>
        <dbReference type="ChEBI" id="CHEBI:597326"/>
    </ligand>
</feature>
<feature type="binding site" evidence="1">
    <location>
        <position position="353"/>
    </location>
    <ligand>
        <name>substrate</name>
    </ligand>
</feature>
<feature type="modified residue" description="N6-(pyridoxal phosphate)lysine" evidence="1">
    <location>
        <position position="239"/>
    </location>
</feature>
<protein>
    <recommendedName>
        <fullName evidence="1">8-amino-7-oxononanoate synthase</fullName>
        <shortName evidence="1">AONS</shortName>
        <ecNumber evidence="1">2.3.1.47</ecNumber>
    </recommendedName>
    <alternativeName>
        <fullName evidence="1">7-keto-8-amino-pelargonic acid synthase</fullName>
        <shortName evidence="1">7-KAP synthase</shortName>
        <shortName evidence="1">KAPA synthase</shortName>
    </alternativeName>
    <alternativeName>
        <fullName evidence="1">8-amino-7-ketopelargonate synthase</fullName>
    </alternativeName>
</protein>
<sequence length="390" mass="41414">MSALLDRLRTDLSALAGQGLRRVRRSNALPCAPRALVDGREMLAFCSNDYLGLAAEPALATALAQASSRWGAGSGASHLVSGHYAVHDALEHRLAAFVGAERALYFSTGYMANAGIVPALVGRGDAVFADRLNHASLVDGVLLSRADMHRYPHGDLAVLARQLAGSSAARKLIVTDAVFSMDGDVAPLADLLELAERHDAWLMVDDAHGFGVLGPQGRGALADAGLQHWRLIYVGTLGKAAGVSGAFAAGHGELVEWLLQKARTYIFTTGAPPALAEALLLSLDLIEAADDRRTHLAGLIERFGAELTLSRWQRLPSRTPIQPIRIGGNEEALAVARALWDEGLWVPAIRPPTVPAGSARLRVSLTAAHTEADVLRLARTLNRLEHAAHG</sequence>
<dbReference type="EC" id="2.3.1.47" evidence="1"/>
<dbReference type="EMBL" id="AM406670">
    <property type="protein sequence ID" value="CAL94506.1"/>
    <property type="molecule type" value="Genomic_DNA"/>
</dbReference>
<dbReference type="RefSeq" id="WP_011765622.1">
    <property type="nucleotide sequence ID" value="NC_008702.1"/>
</dbReference>
<dbReference type="SMR" id="A1K6Q1"/>
<dbReference type="STRING" id="62928.azo1889"/>
<dbReference type="KEGG" id="azo:azo1889"/>
<dbReference type="eggNOG" id="COG0156">
    <property type="taxonomic scope" value="Bacteria"/>
</dbReference>
<dbReference type="HOGENOM" id="CLU_015846_11_2_4"/>
<dbReference type="UniPathway" id="UPA00078"/>
<dbReference type="Proteomes" id="UP000002588">
    <property type="component" value="Chromosome"/>
</dbReference>
<dbReference type="GO" id="GO:0008710">
    <property type="term" value="F:8-amino-7-oxononanoate synthase activity"/>
    <property type="evidence" value="ECO:0007669"/>
    <property type="project" value="UniProtKB-UniRule"/>
</dbReference>
<dbReference type="GO" id="GO:0030170">
    <property type="term" value="F:pyridoxal phosphate binding"/>
    <property type="evidence" value="ECO:0007669"/>
    <property type="project" value="UniProtKB-UniRule"/>
</dbReference>
<dbReference type="GO" id="GO:0009102">
    <property type="term" value="P:biotin biosynthetic process"/>
    <property type="evidence" value="ECO:0007669"/>
    <property type="project" value="UniProtKB-UniRule"/>
</dbReference>
<dbReference type="CDD" id="cd06454">
    <property type="entry name" value="KBL_like"/>
    <property type="match status" value="1"/>
</dbReference>
<dbReference type="Gene3D" id="3.90.1150.10">
    <property type="entry name" value="Aspartate Aminotransferase, domain 1"/>
    <property type="match status" value="1"/>
</dbReference>
<dbReference type="Gene3D" id="3.40.640.10">
    <property type="entry name" value="Type I PLP-dependent aspartate aminotransferase-like (Major domain)"/>
    <property type="match status" value="1"/>
</dbReference>
<dbReference type="HAMAP" id="MF_01693">
    <property type="entry name" value="BioF_aminotrans_2"/>
    <property type="match status" value="1"/>
</dbReference>
<dbReference type="InterPro" id="IPR004839">
    <property type="entry name" value="Aminotransferase_I/II_large"/>
</dbReference>
<dbReference type="InterPro" id="IPR050087">
    <property type="entry name" value="AON_synthase_class-II"/>
</dbReference>
<dbReference type="InterPro" id="IPR004723">
    <property type="entry name" value="AONS_Archaea/Proteobacteria"/>
</dbReference>
<dbReference type="InterPro" id="IPR022834">
    <property type="entry name" value="AONS_Proteobacteria"/>
</dbReference>
<dbReference type="InterPro" id="IPR015424">
    <property type="entry name" value="PyrdxlP-dep_Trfase"/>
</dbReference>
<dbReference type="InterPro" id="IPR015421">
    <property type="entry name" value="PyrdxlP-dep_Trfase_major"/>
</dbReference>
<dbReference type="InterPro" id="IPR015422">
    <property type="entry name" value="PyrdxlP-dep_Trfase_small"/>
</dbReference>
<dbReference type="NCBIfam" id="TIGR00858">
    <property type="entry name" value="bioF"/>
    <property type="match status" value="1"/>
</dbReference>
<dbReference type="PANTHER" id="PTHR13693:SF100">
    <property type="entry name" value="8-AMINO-7-OXONONANOATE SYNTHASE"/>
    <property type="match status" value="1"/>
</dbReference>
<dbReference type="PANTHER" id="PTHR13693">
    <property type="entry name" value="CLASS II AMINOTRANSFERASE/8-AMINO-7-OXONONANOATE SYNTHASE"/>
    <property type="match status" value="1"/>
</dbReference>
<dbReference type="Pfam" id="PF00155">
    <property type="entry name" value="Aminotran_1_2"/>
    <property type="match status" value="1"/>
</dbReference>
<dbReference type="SUPFAM" id="SSF53383">
    <property type="entry name" value="PLP-dependent transferases"/>
    <property type="match status" value="1"/>
</dbReference>
<gene>
    <name evidence="1" type="primary">bioF</name>
    <name type="ordered locus">azo1889</name>
</gene>